<protein>
    <recommendedName>
        <fullName evidence="1">S-adenosylmethionine:tRNA ribosyltransferase-isomerase</fullName>
        <ecNumber evidence="1">2.4.99.17</ecNumber>
    </recommendedName>
    <alternativeName>
        <fullName evidence="1">Queuosine biosynthesis protein QueA</fullName>
    </alternativeName>
</protein>
<dbReference type="EC" id="2.4.99.17" evidence="1"/>
<dbReference type="EMBL" id="BX936398">
    <property type="protein sequence ID" value="CAH20167.1"/>
    <property type="molecule type" value="Genomic_DNA"/>
</dbReference>
<dbReference type="RefSeq" id="WP_011191859.1">
    <property type="nucleotide sequence ID" value="NC_006155.1"/>
</dbReference>
<dbReference type="SMR" id="Q66DW6"/>
<dbReference type="KEGG" id="ypo:BZ17_1619"/>
<dbReference type="KEGG" id="yps:YPTB0927"/>
<dbReference type="PATRIC" id="fig|273123.14.peg.1717"/>
<dbReference type="UniPathway" id="UPA00392"/>
<dbReference type="Proteomes" id="UP000001011">
    <property type="component" value="Chromosome"/>
</dbReference>
<dbReference type="GO" id="GO:0005737">
    <property type="term" value="C:cytoplasm"/>
    <property type="evidence" value="ECO:0007669"/>
    <property type="project" value="UniProtKB-SubCell"/>
</dbReference>
<dbReference type="GO" id="GO:0051075">
    <property type="term" value="F:S-adenosylmethionine:tRNA ribosyltransferase-isomerase activity"/>
    <property type="evidence" value="ECO:0007669"/>
    <property type="project" value="UniProtKB-EC"/>
</dbReference>
<dbReference type="GO" id="GO:0008616">
    <property type="term" value="P:queuosine biosynthetic process"/>
    <property type="evidence" value="ECO:0007669"/>
    <property type="project" value="UniProtKB-UniRule"/>
</dbReference>
<dbReference type="GO" id="GO:0002099">
    <property type="term" value="P:tRNA wobble guanine modification"/>
    <property type="evidence" value="ECO:0007669"/>
    <property type="project" value="TreeGrafter"/>
</dbReference>
<dbReference type="FunFam" id="2.40.10.240:FF:000001">
    <property type="entry name" value="S-adenosylmethionine:tRNA ribosyltransferase-isomerase"/>
    <property type="match status" value="1"/>
</dbReference>
<dbReference type="FunFam" id="3.40.1780.10:FF:000001">
    <property type="entry name" value="S-adenosylmethionine:tRNA ribosyltransferase-isomerase"/>
    <property type="match status" value="1"/>
</dbReference>
<dbReference type="Gene3D" id="2.40.10.240">
    <property type="entry name" value="QueA-like"/>
    <property type="match status" value="1"/>
</dbReference>
<dbReference type="Gene3D" id="3.40.1780.10">
    <property type="entry name" value="QueA-like"/>
    <property type="match status" value="1"/>
</dbReference>
<dbReference type="HAMAP" id="MF_00113">
    <property type="entry name" value="QueA"/>
    <property type="match status" value="1"/>
</dbReference>
<dbReference type="InterPro" id="IPR003699">
    <property type="entry name" value="QueA"/>
</dbReference>
<dbReference type="InterPro" id="IPR042118">
    <property type="entry name" value="QueA_dom1"/>
</dbReference>
<dbReference type="InterPro" id="IPR042119">
    <property type="entry name" value="QueA_dom2"/>
</dbReference>
<dbReference type="InterPro" id="IPR036100">
    <property type="entry name" value="QueA_sf"/>
</dbReference>
<dbReference type="NCBIfam" id="NF001140">
    <property type="entry name" value="PRK00147.1"/>
    <property type="match status" value="1"/>
</dbReference>
<dbReference type="NCBIfam" id="TIGR00113">
    <property type="entry name" value="queA"/>
    <property type="match status" value="1"/>
</dbReference>
<dbReference type="PANTHER" id="PTHR30307">
    <property type="entry name" value="S-ADENOSYLMETHIONINE:TRNA RIBOSYLTRANSFERASE-ISOMERASE"/>
    <property type="match status" value="1"/>
</dbReference>
<dbReference type="PANTHER" id="PTHR30307:SF0">
    <property type="entry name" value="S-ADENOSYLMETHIONINE:TRNA RIBOSYLTRANSFERASE-ISOMERASE"/>
    <property type="match status" value="1"/>
</dbReference>
<dbReference type="Pfam" id="PF02547">
    <property type="entry name" value="Queuosine_synth"/>
    <property type="match status" value="1"/>
</dbReference>
<dbReference type="SUPFAM" id="SSF111337">
    <property type="entry name" value="QueA-like"/>
    <property type="match status" value="1"/>
</dbReference>
<comment type="function">
    <text evidence="1">Transfers and isomerizes the ribose moiety from AdoMet to the 7-aminomethyl group of 7-deazaguanine (preQ1-tRNA) to give epoxyqueuosine (oQ-tRNA).</text>
</comment>
<comment type="catalytic activity">
    <reaction evidence="1">
        <text>7-aminomethyl-7-carbaguanosine(34) in tRNA + S-adenosyl-L-methionine = epoxyqueuosine(34) in tRNA + adenine + L-methionine + 2 H(+)</text>
        <dbReference type="Rhea" id="RHEA:32155"/>
        <dbReference type="Rhea" id="RHEA-COMP:10342"/>
        <dbReference type="Rhea" id="RHEA-COMP:18582"/>
        <dbReference type="ChEBI" id="CHEBI:15378"/>
        <dbReference type="ChEBI" id="CHEBI:16708"/>
        <dbReference type="ChEBI" id="CHEBI:57844"/>
        <dbReference type="ChEBI" id="CHEBI:59789"/>
        <dbReference type="ChEBI" id="CHEBI:82833"/>
        <dbReference type="ChEBI" id="CHEBI:194443"/>
        <dbReference type="EC" id="2.4.99.17"/>
    </reaction>
</comment>
<comment type="pathway">
    <text evidence="1">tRNA modification; tRNA-queuosine biosynthesis.</text>
</comment>
<comment type="subunit">
    <text evidence="1">Monomer.</text>
</comment>
<comment type="subcellular location">
    <subcellularLocation>
        <location evidence="1">Cytoplasm</location>
    </subcellularLocation>
</comment>
<comment type="similarity">
    <text evidence="1">Belongs to the QueA family.</text>
</comment>
<keyword id="KW-0963">Cytoplasm</keyword>
<keyword id="KW-0671">Queuosine biosynthesis</keyword>
<keyword id="KW-0949">S-adenosyl-L-methionine</keyword>
<keyword id="KW-0808">Transferase</keyword>
<evidence type="ECO:0000255" key="1">
    <source>
        <dbReference type="HAMAP-Rule" id="MF_00113"/>
    </source>
</evidence>
<proteinExistence type="inferred from homology"/>
<sequence>MRVADFSFELPEALIAHYPQPQRSGCRLLSLDGPTGTLTHGIFTDLLDKLAPGDLLVFNNTRVIPARLFGRKASGGKLEVLVERVLDDHRVLAHVKASKAPKPGAELLLGDDESIRATMLARHDTLFELCFDDERDVFTILNAVGHMPLPPYIDRPDEDADRELYQTVYSQRPGAVAAPTAGLHFDEPMLAALQEKGIEMAFVTLHVGAGTFQPVRVDTIEDHIMHSEYAEVPQEVVDAVLACKARGKRVVAVGTTSVRSLESAAKAAENGLIAPFFGDTRIFIYPGYHYQVVDALVTNFHLPESTLIMLVSAFAGYKNTMNAYQQAVAEQYRFFSYGDAMFISRNPRAPQEKVSP</sequence>
<name>QUEA_YERPS</name>
<organism>
    <name type="scientific">Yersinia pseudotuberculosis serotype I (strain IP32953)</name>
    <dbReference type="NCBI Taxonomy" id="273123"/>
    <lineage>
        <taxon>Bacteria</taxon>
        <taxon>Pseudomonadati</taxon>
        <taxon>Pseudomonadota</taxon>
        <taxon>Gammaproteobacteria</taxon>
        <taxon>Enterobacterales</taxon>
        <taxon>Yersiniaceae</taxon>
        <taxon>Yersinia</taxon>
    </lineage>
</organism>
<accession>Q66DW6</accession>
<feature type="chain" id="PRO_0000231394" description="S-adenosylmethionine:tRNA ribosyltransferase-isomerase">
    <location>
        <begin position="1"/>
        <end position="356"/>
    </location>
</feature>
<reference key="1">
    <citation type="journal article" date="2004" name="Proc. Natl. Acad. Sci. U.S.A.">
        <title>Insights into the evolution of Yersinia pestis through whole-genome comparison with Yersinia pseudotuberculosis.</title>
        <authorList>
            <person name="Chain P.S.G."/>
            <person name="Carniel E."/>
            <person name="Larimer F.W."/>
            <person name="Lamerdin J."/>
            <person name="Stoutland P.O."/>
            <person name="Regala W.M."/>
            <person name="Georgescu A.M."/>
            <person name="Vergez L.M."/>
            <person name="Land M.L."/>
            <person name="Motin V.L."/>
            <person name="Brubaker R.R."/>
            <person name="Fowler J."/>
            <person name="Hinnebusch J."/>
            <person name="Marceau M."/>
            <person name="Medigue C."/>
            <person name="Simonet M."/>
            <person name="Chenal-Francisque V."/>
            <person name="Souza B."/>
            <person name="Dacheux D."/>
            <person name="Elliott J.M."/>
            <person name="Derbise A."/>
            <person name="Hauser L.J."/>
            <person name="Garcia E."/>
        </authorList>
    </citation>
    <scope>NUCLEOTIDE SEQUENCE [LARGE SCALE GENOMIC DNA]</scope>
    <source>
        <strain>IP32953</strain>
    </source>
</reference>
<gene>
    <name evidence="1" type="primary">queA</name>
    <name type="ordered locus">YPTB0927</name>
</gene>